<keyword id="KW-0066">ATP synthesis</keyword>
<keyword id="KW-0067">ATP-binding</keyword>
<keyword id="KW-1003">Cell membrane</keyword>
<keyword id="KW-0139">CF(1)</keyword>
<keyword id="KW-0375">Hydrogen ion transport</keyword>
<keyword id="KW-0406">Ion transport</keyword>
<keyword id="KW-0472">Membrane</keyword>
<keyword id="KW-0547">Nucleotide-binding</keyword>
<keyword id="KW-1185">Reference proteome</keyword>
<keyword id="KW-1278">Translocase</keyword>
<keyword id="KW-0813">Transport</keyword>
<comment type="function">
    <text evidence="1">Produces ATP from ADP in the presence of a proton gradient across the membrane. The alpha chain is a regulatory subunit.</text>
</comment>
<comment type="catalytic activity">
    <reaction evidence="1">
        <text>ATP + H2O + 4 H(+)(in) = ADP + phosphate + 5 H(+)(out)</text>
        <dbReference type="Rhea" id="RHEA:57720"/>
        <dbReference type="ChEBI" id="CHEBI:15377"/>
        <dbReference type="ChEBI" id="CHEBI:15378"/>
        <dbReference type="ChEBI" id="CHEBI:30616"/>
        <dbReference type="ChEBI" id="CHEBI:43474"/>
        <dbReference type="ChEBI" id="CHEBI:456216"/>
        <dbReference type="EC" id="7.1.2.2"/>
    </reaction>
</comment>
<comment type="subunit">
    <text evidence="1">F-type ATPases have 2 components, CF(1) - the catalytic core - and CF(0) - the membrane proton channel. CF(1) has five subunits: alpha(3), beta(3), gamma(1), delta(1), epsilon(1). CF(0) has three main subunits: a(1), b(2) and c(9-12). The alpha and beta chains form an alternating ring which encloses part of the gamma chain. CF(1) is attached to CF(0) by a central stalk formed by the gamma and epsilon chains, while a peripheral stalk is formed by the delta and b chains.</text>
</comment>
<comment type="subcellular location">
    <subcellularLocation>
        <location evidence="1">Cell membrane</location>
        <topology evidence="1">Peripheral membrane protein</topology>
    </subcellularLocation>
</comment>
<comment type="similarity">
    <text evidence="1">Belongs to the ATPase alpha/beta chains family.</text>
</comment>
<sequence length="505" mass="55040">MKHMSIRAEEISALIKQQIENYQSEIEVSDVGTVIQVGDGIARAHGLDNVMAGELVEFSNGVMGLAQNLEENNVGIIILGPYTEIREGDEVRRTGRIMQVPVGKELIGRVVNPLGQPVDGLGPINTTNTRPIESPAPGVMDRKSVHEPLQTGIKAIDALVPIGRGQRELIIGDRQTGKTAVALDTIINQKDEDMICIYVAIGQKESTVRNVVETLRKHGALEYTIVVTASASQPAPLLYLAPYAGVTMGEEFMYNGKHVLVVYDDLSKQAAAYRELSLLLRRPPGREAYPGDVFYLHSRLLERAAKLSDAKGGGSLTALPFIETQAGDVSAYIPTNVISITDGQIFLQSDLFFSGVRPAIDAGTSVSRVGGSAQIKAMSKVSGTLRLDLASYRELEAFAQFGSDLDKATQAKLNRGARTVEVLKQGLHKPLRVEKQVIILYALTRGFLDDIPVVDITRFEEEFHAWLDSNATDLLEEIRTTKKLADDDKFAAAINGFKKVFVASE</sequence>
<accession>Q814W0</accession>
<dbReference type="EC" id="7.1.2.2" evidence="1"/>
<dbReference type="EMBL" id="AE016877">
    <property type="protein sequence ID" value="AAP12171.1"/>
    <property type="molecule type" value="Genomic_DNA"/>
</dbReference>
<dbReference type="SMR" id="Q814W0"/>
<dbReference type="STRING" id="226900.BC_5308"/>
<dbReference type="MetOSite" id="Q814W0"/>
<dbReference type="KEGG" id="bce:BC5308"/>
<dbReference type="HOGENOM" id="CLU_010091_2_1_9"/>
<dbReference type="Proteomes" id="UP000001417">
    <property type="component" value="Chromosome"/>
</dbReference>
<dbReference type="GO" id="GO:0005886">
    <property type="term" value="C:plasma membrane"/>
    <property type="evidence" value="ECO:0007669"/>
    <property type="project" value="UniProtKB-SubCell"/>
</dbReference>
<dbReference type="GO" id="GO:0045259">
    <property type="term" value="C:proton-transporting ATP synthase complex"/>
    <property type="evidence" value="ECO:0007669"/>
    <property type="project" value="UniProtKB-KW"/>
</dbReference>
<dbReference type="GO" id="GO:0043531">
    <property type="term" value="F:ADP binding"/>
    <property type="evidence" value="ECO:0000318"/>
    <property type="project" value="GO_Central"/>
</dbReference>
<dbReference type="GO" id="GO:0005524">
    <property type="term" value="F:ATP binding"/>
    <property type="evidence" value="ECO:0000318"/>
    <property type="project" value="GO_Central"/>
</dbReference>
<dbReference type="GO" id="GO:0046933">
    <property type="term" value="F:proton-transporting ATP synthase activity, rotational mechanism"/>
    <property type="evidence" value="ECO:0007669"/>
    <property type="project" value="UniProtKB-UniRule"/>
</dbReference>
<dbReference type="GO" id="GO:0015986">
    <property type="term" value="P:proton motive force-driven ATP synthesis"/>
    <property type="evidence" value="ECO:0000318"/>
    <property type="project" value="GO_Central"/>
</dbReference>
<dbReference type="CDD" id="cd18113">
    <property type="entry name" value="ATP-synt_F1_alpha_C"/>
    <property type="match status" value="1"/>
</dbReference>
<dbReference type="CDD" id="cd18116">
    <property type="entry name" value="ATP-synt_F1_alpha_N"/>
    <property type="match status" value="1"/>
</dbReference>
<dbReference type="CDD" id="cd01132">
    <property type="entry name" value="F1-ATPase_alpha_CD"/>
    <property type="match status" value="1"/>
</dbReference>
<dbReference type="FunFam" id="1.20.150.20:FF:000001">
    <property type="entry name" value="ATP synthase subunit alpha"/>
    <property type="match status" value="1"/>
</dbReference>
<dbReference type="FunFam" id="2.40.30.20:FF:000001">
    <property type="entry name" value="ATP synthase subunit alpha"/>
    <property type="match status" value="1"/>
</dbReference>
<dbReference type="FunFam" id="3.40.50.300:FF:000002">
    <property type="entry name" value="ATP synthase subunit alpha"/>
    <property type="match status" value="1"/>
</dbReference>
<dbReference type="Gene3D" id="2.40.30.20">
    <property type="match status" value="1"/>
</dbReference>
<dbReference type="Gene3D" id="1.20.150.20">
    <property type="entry name" value="ATP synthase alpha/beta chain, C-terminal domain"/>
    <property type="match status" value="1"/>
</dbReference>
<dbReference type="Gene3D" id="3.40.50.300">
    <property type="entry name" value="P-loop containing nucleotide triphosphate hydrolases"/>
    <property type="match status" value="1"/>
</dbReference>
<dbReference type="HAMAP" id="MF_01346">
    <property type="entry name" value="ATP_synth_alpha_bact"/>
    <property type="match status" value="1"/>
</dbReference>
<dbReference type="InterPro" id="IPR023366">
    <property type="entry name" value="ATP_synth_asu-like_sf"/>
</dbReference>
<dbReference type="InterPro" id="IPR000793">
    <property type="entry name" value="ATP_synth_asu_C"/>
</dbReference>
<dbReference type="InterPro" id="IPR038376">
    <property type="entry name" value="ATP_synth_asu_C_sf"/>
</dbReference>
<dbReference type="InterPro" id="IPR033732">
    <property type="entry name" value="ATP_synth_F1_a_nt-bd_dom"/>
</dbReference>
<dbReference type="InterPro" id="IPR005294">
    <property type="entry name" value="ATP_synth_F1_asu"/>
</dbReference>
<dbReference type="InterPro" id="IPR020003">
    <property type="entry name" value="ATPase_a/bsu_AS"/>
</dbReference>
<dbReference type="InterPro" id="IPR004100">
    <property type="entry name" value="ATPase_F1/V1/A1_a/bsu_N"/>
</dbReference>
<dbReference type="InterPro" id="IPR036121">
    <property type="entry name" value="ATPase_F1/V1/A1_a/bsu_N_sf"/>
</dbReference>
<dbReference type="InterPro" id="IPR000194">
    <property type="entry name" value="ATPase_F1/V1/A1_a/bsu_nucl-bd"/>
</dbReference>
<dbReference type="InterPro" id="IPR027417">
    <property type="entry name" value="P-loop_NTPase"/>
</dbReference>
<dbReference type="NCBIfam" id="TIGR00962">
    <property type="entry name" value="atpA"/>
    <property type="match status" value="1"/>
</dbReference>
<dbReference type="NCBIfam" id="NF009884">
    <property type="entry name" value="PRK13343.1"/>
    <property type="match status" value="1"/>
</dbReference>
<dbReference type="PANTHER" id="PTHR48082">
    <property type="entry name" value="ATP SYNTHASE SUBUNIT ALPHA, MITOCHONDRIAL"/>
    <property type="match status" value="1"/>
</dbReference>
<dbReference type="PANTHER" id="PTHR48082:SF2">
    <property type="entry name" value="ATP SYNTHASE SUBUNIT ALPHA, MITOCHONDRIAL"/>
    <property type="match status" value="1"/>
</dbReference>
<dbReference type="Pfam" id="PF00006">
    <property type="entry name" value="ATP-synt_ab"/>
    <property type="match status" value="1"/>
</dbReference>
<dbReference type="Pfam" id="PF00306">
    <property type="entry name" value="ATP-synt_ab_C"/>
    <property type="match status" value="1"/>
</dbReference>
<dbReference type="Pfam" id="PF02874">
    <property type="entry name" value="ATP-synt_ab_N"/>
    <property type="match status" value="1"/>
</dbReference>
<dbReference type="PIRSF" id="PIRSF039088">
    <property type="entry name" value="F_ATPase_subunit_alpha"/>
    <property type="match status" value="1"/>
</dbReference>
<dbReference type="SUPFAM" id="SSF47917">
    <property type="entry name" value="C-terminal domain of alpha and beta subunits of F1 ATP synthase"/>
    <property type="match status" value="1"/>
</dbReference>
<dbReference type="SUPFAM" id="SSF50615">
    <property type="entry name" value="N-terminal domain of alpha and beta subunits of F1 ATP synthase"/>
    <property type="match status" value="1"/>
</dbReference>
<dbReference type="SUPFAM" id="SSF52540">
    <property type="entry name" value="P-loop containing nucleoside triphosphate hydrolases"/>
    <property type="match status" value="1"/>
</dbReference>
<dbReference type="PROSITE" id="PS00152">
    <property type="entry name" value="ATPASE_ALPHA_BETA"/>
    <property type="match status" value="1"/>
</dbReference>
<protein>
    <recommendedName>
        <fullName evidence="1">ATP synthase subunit alpha</fullName>
        <ecNumber evidence="1">7.1.2.2</ecNumber>
    </recommendedName>
    <alternativeName>
        <fullName evidence="1">ATP synthase F1 sector subunit alpha</fullName>
    </alternativeName>
    <alternativeName>
        <fullName evidence="1">F-ATPase subunit alpha</fullName>
    </alternativeName>
</protein>
<evidence type="ECO:0000255" key="1">
    <source>
        <dbReference type="HAMAP-Rule" id="MF_01346"/>
    </source>
</evidence>
<evidence type="ECO:0000256" key="2">
    <source>
        <dbReference type="SAM" id="MobiDB-lite"/>
    </source>
</evidence>
<gene>
    <name evidence="1" type="primary">atpA</name>
    <name type="ordered locus">BC_5308</name>
</gene>
<organism>
    <name type="scientific">Bacillus cereus (strain ATCC 14579 / DSM 31 / CCUG 7414 / JCM 2152 / NBRC 15305 / NCIMB 9373 / NCTC 2599 / NRRL B-3711)</name>
    <dbReference type="NCBI Taxonomy" id="226900"/>
    <lineage>
        <taxon>Bacteria</taxon>
        <taxon>Bacillati</taxon>
        <taxon>Bacillota</taxon>
        <taxon>Bacilli</taxon>
        <taxon>Bacillales</taxon>
        <taxon>Bacillaceae</taxon>
        <taxon>Bacillus</taxon>
        <taxon>Bacillus cereus group</taxon>
    </lineage>
</organism>
<name>ATPA_BACCR</name>
<reference key="1">
    <citation type="journal article" date="2003" name="Nature">
        <title>Genome sequence of Bacillus cereus and comparative analysis with Bacillus anthracis.</title>
        <authorList>
            <person name="Ivanova N."/>
            <person name="Sorokin A."/>
            <person name="Anderson I."/>
            <person name="Galleron N."/>
            <person name="Candelon B."/>
            <person name="Kapatral V."/>
            <person name="Bhattacharyya A."/>
            <person name="Reznik G."/>
            <person name="Mikhailova N."/>
            <person name="Lapidus A."/>
            <person name="Chu L."/>
            <person name="Mazur M."/>
            <person name="Goltsman E."/>
            <person name="Larsen N."/>
            <person name="D'Souza M."/>
            <person name="Walunas T."/>
            <person name="Grechkin Y."/>
            <person name="Pusch G."/>
            <person name="Haselkorn R."/>
            <person name="Fonstein M."/>
            <person name="Ehrlich S.D."/>
            <person name="Overbeek R."/>
            <person name="Kyrpides N.C."/>
        </authorList>
    </citation>
    <scope>NUCLEOTIDE SEQUENCE [LARGE SCALE GENOMIC DNA]</scope>
    <source>
        <strain>ATCC 14579 / DSM 31 / CCUG 7414 / JCM 2152 / NBRC 15305 / NCIMB 9373 / NCTC 2599 / NRRL B-3711</strain>
    </source>
</reference>
<proteinExistence type="inferred from homology"/>
<feature type="chain" id="PRO_0000238194" description="ATP synthase subunit alpha">
    <location>
        <begin position="1"/>
        <end position="505"/>
    </location>
</feature>
<feature type="region of interest" description="Disordered" evidence="2">
    <location>
        <begin position="118"/>
        <end position="138"/>
    </location>
</feature>
<feature type="binding site" evidence="1">
    <location>
        <begin position="172"/>
        <end position="179"/>
    </location>
    <ligand>
        <name>ATP</name>
        <dbReference type="ChEBI" id="CHEBI:30616"/>
    </ligand>
</feature>
<feature type="site" description="Required for activity" evidence="1">
    <location>
        <position position="365"/>
    </location>
</feature>